<gene>
    <name evidence="1" type="primary">rihC</name>
    <name type="ordered locus">STY0060</name>
    <name type="ordered locus">t0053</name>
</gene>
<evidence type="ECO:0000255" key="1">
    <source>
        <dbReference type="HAMAP-Rule" id="MF_01432"/>
    </source>
</evidence>
<comment type="function">
    <text evidence="1">Hydrolyzes both purine and pyrimidine ribonucleosides with a broad-substrate specificity.</text>
</comment>
<comment type="similarity">
    <text evidence="1">Belongs to the IUNH family. RihC subfamily.</text>
</comment>
<sequence>MTASLHIILDTDPGIDDAAAIAAALFAPQLDLQLITTVAGNVSVEKTTRNALQLLHFWNSDIPLAQGAATPLLRPLRDAAYVHGESGMEGYDFVDHQRQPLAKPAFIAIRDVLMNAPEPMTLVAIGPLTNIALLLMHYPECACNIRRLVLMGGSAGRGNFTPNAEFNIAVDPEAAALVFRSGLEIVMCGLDVTNQAMLSPDFLNKLPALNRTGKMLHSLFNHYRSGSMRTGVRMHDLCAIAWLVRPELFTLQSCFVAVETQGEYTAGTTVVDIEGRLGQPANAQVALALDVDGFRQWVAEVFAYVP</sequence>
<dbReference type="EC" id="3.2.-.-" evidence="1"/>
<dbReference type="EMBL" id="AL513382">
    <property type="protein sequence ID" value="CAD01206.1"/>
    <property type="molecule type" value="Genomic_DNA"/>
</dbReference>
<dbReference type="EMBL" id="AE014613">
    <property type="protein sequence ID" value="AAO67786.1"/>
    <property type="molecule type" value="Genomic_DNA"/>
</dbReference>
<dbReference type="RefSeq" id="NP_454662.1">
    <property type="nucleotide sequence ID" value="NC_003198.1"/>
</dbReference>
<dbReference type="RefSeq" id="WP_000127280.1">
    <property type="nucleotide sequence ID" value="NZ_WSUR01000014.1"/>
</dbReference>
<dbReference type="SMR" id="Q8Z9M9"/>
<dbReference type="STRING" id="220341.gene:17584108"/>
<dbReference type="KEGG" id="stt:t0053"/>
<dbReference type="KEGG" id="sty:STY0060"/>
<dbReference type="PATRIC" id="fig|220341.7.peg.60"/>
<dbReference type="eggNOG" id="COG1957">
    <property type="taxonomic scope" value="Bacteria"/>
</dbReference>
<dbReference type="HOGENOM" id="CLU_036838_2_2_6"/>
<dbReference type="OMA" id="NEYTCPT"/>
<dbReference type="OrthoDB" id="9797882at2"/>
<dbReference type="Proteomes" id="UP000000541">
    <property type="component" value="Chromosome"/>
</dbReference>
<dbReference type="Proteomes" id="UP000002670">
    <property type="component" value="Chromosome"/>
</dbReference>
<dbReference type="GO" id="GO:0005829">
    <property type="term" value="C:cytosol"/>
    <property type="evidence" value="ECO:0007669"/>
    <property type="project" value="TreeGrafter"/>
</dbReference>
<dbReference type="GO" id="GO:0008477">
    <property type="term" value="F:purine nucleosidase activity"/>
    <property type="evidence" value="ECO:0007669"/>
    <property type="project" value="TreeGrafter"/>
</dbReference>
<dbReference type="GO" id="GO:0006144">
    <property type="term" value="P:purine nucleobase metabolic process"/>
    <property type="evidence" value="ECO:0007669"/>
    <property type="project" value="UniProtKB-UniRule"/>
</dbReference>
<dbReference type="GO" id="GO:0006152">
    <property type="term" value="P:purine nucleoside catabolic process"/>
    <property type="evidence" value="ECO:0007669"/>
    <property type="project" value="TreeGrafter"/>
</dbReference>
<dbReference type="GO" id="GO:0006206">
    <property type="term" value="P:pyrimidine nucleobase metabolic process"/>
    <property type="evidence" value="ECO:0007669"/>
    <property type="project" value="UniProtKB-UniRule"/>
</dbReference>
<dbReference type="CDD" id="cd02651">
    <property type="entry name" value="nuc_hydro_IU_UC_XIUA"/>
    <property type="match status" value="1"/>
</dbReference>
<dbReference type="FunFam" id="3.90.245.10:FF:000002">
    <property type="entry name" value="Non-specific ribonucleoside hydrolase RihC"/>
    <property type="match status" value="1"/>
</dbReference>
<dbReference type="Gene3D" id="3.90.245.10">
    <property type="entry name" value="Ribonucleoside hydrolase-like"/>
    <property type="match status" value="1"/>
</dbReference>
<dbReference type="HAMAP" id="MF_01432">
    <property type="entry name" value="Nucleosid_hydro_RihC"/>
    <property type="match status" value="1"/>
</dbReference>
<dbReference type="InterPro" id="IPR001910">
    <property type="entry name" value="Inosine/uridine_hydrolase_dom"/>
</dbReference>
<dbReference type="InterPro" id="IPR023186">
    <property type="entry name" value="IUNH"/>
</dbReference>
<dbReference type="InterPro" id="IPR022976">
    <property type="entry name" value="Nucleosid_hydro_RihC_nonspecif"/>
</dbReference>
<dbReference type="InterPro" id="IPR036452">
    <property type="entry name" value="Ribo_hydro-like"/>
</dbReference>
<dbReference type="NCBIfam" id="NF008036">
    <property type="entry name" value="PRK10768.1"/>
    <property type="match status" value="1"/>
</dbReference>
<dbReference type="PANTHER" id="PTHR12304">
    <property type="entry name" value="INOSINE-URIDINE PREFERRING NUCLEOSIDE HYDROLASE"/>
    <property type="match status" value="1"/>
</dbReference>
<dbReference type="PANTHER" id="PTHR12304:SF15">
    <property type="entry name" value="NON-SPECIFIC RIBONUCLEOSIDE HYDROLASE RIHC"/>
    <property type="match status" value="1"/>
</dbReference>
<dbReference type="Pfam" id="PF01156">
    <property type="entry name" value="IU_nuc_hydro"/>
    <property type="match status" value="1"/>
</dbReference>
<dbReference type="SUPFAM" id="SSF53590">
    <property type="entry name" value="Nucleoside hydrolase"/>
    <property type="match status" value="1"/>
</dbReference>
<feature type="chain" id="PRO_0000206836" description="Non-specific ribonucleoside hydrolase RihC">
    <location>
        <begin position="1"/>
        <end position="306"/>
    </location>
</feature>
<feature type="active site" evidence="1">
    <location>
        <position position="235"/>
    </location>
</feature>
<reference key="1">
    <citation type="journal article" date="2001" name="Nature">
        <title>Complete genome sequence of a multiple drug resistant Salmonella enterica serovar Typhi CT18.</title>
        <authorList>
            <person name="Parkhill J."/>
            <person name="Dougan G."/>
            <person name="James K.D."/>
            <person name="Thomson N.R."/>
            <person name="Pickard D."/>
            <person name="Wain J."/>
            <person name="Churcher C.M."/>
            <person name="Mungall K.L."/>
            <person name="Bentley S.D."/>
            <person name="Holden M.T.G."/>
            <person name="Sebaihia M."/>
            <person name="Baker S."/>
            <person name="Basham D."/>
            <person name="Brooks K."/>
            <person name="Chillingworth T."/>
            <person name="Connerton P."/>
            <person name="Cronin A."/>
            <person name="Davis P."/>
            <person name="Davies R.M."/>
            <person name="Dowd L."/>
            <person name="White N."/>
            <person name="Farrar J."/>
            <person name="Feltwell T."/>
            <person name="Hamlin N."/>
            <person name="Haque A."/>
            <person name="Hien T.T."/>
            <person name="Holroyd S."/>
            <person name="Jagels K."/>
            <person name="Krogh A."/>
            <person name="Larsen T.S."/>
            <person name="Leather S."/>
            <person name="Moule S."/>
            <person name="O'Gaora P."/>
            <person name="Parry C."/>
            <person name="Quail M.A."/>
            <person name="Rutherford K.M."/>
            <person name="Simmonds M."/>
            <person name="Skelton J."/>
            <person name="Stevens K."/>
            <person name="Whitehead S."/>
            <person name="Barrell B.G."/>
        </authorList>
    </citation>
    <scope>NUCLEOTIDE SEQUENCE [LARGE SCALE GENOMIC DNA]</scope>
    <source>
        <strain>CT18</strain>
    </source>
</reference>
<reference key="2">
    <citation type="journal article" date="2003" name="J. Bacteriol.">
        <title>Comparative genomics of Salmonella enterica serovar Typhi strains Ty2 and CT18.</title>
        <authorList>
            <person name="Deng W."/>
            <person name="Liou S.-R."/>
            <person name="Plunkett G. III"/>
            <person name="Mayhew G.F."/>
            <person name="Rose D.J."/>
            <person name="Burland V."/>
            <person name="Kodoyianni V."/>
            <person name="Schwartz D.C."/>
            <person name="Blattner F.R."/>
        </authorList>
    </citation>
    <scope>NUCLEOTIDE SEQUENCE [LARGE SCALE GENOMIC DNA]</scope>
    <source>
        <strain>ATCC 700931 / Ty2</strain>
    </source>
</reference>
<proteinExistence type="inferred from homology"/>
<accession>Q8Z9M9</accession>
<accession>Q7CBX4</accession>
<keyword id="KW-0326">Glycosidase</keyword>
<keyword id="KW-0378">Hydrolase</keyword>
<protein>
    <recommendedName>
        <fullName evidence="1">Non-specific ribonucleoside hydrolase RihC</fullName>
        <ecNumber evidence="1">3.2.-.-</ecNumber>
    </recommendedName>
    <alternativeName>
        <fullName evidence="1">Purine/pyrimidine ribonucleoside hydrolase</fullName>
    </alternativeName>
</protein>
<name>RIHC_SALTI</name>
<organism>
    <name type="scientific">Salmonella typhi</name>
    <dbReference type="NCBI Taxonomy" id="90370"/>
    <lineage>
        <taxon>Bacteria</taxon>
        <taxon>Pseudomonadati</taxon>
        <taxon>Pseudomonadota</taxon>
        <taxon>Gammaproteobacteria</taxon>
        <taxon>Enterobacterales</taxon>
        <taxon>Enterobacteriaceae</taxon>
        <taxon>Salmonella</taxon>
    </lineage>
</organism>